<accession>Q6ZJW8</accession>
<accession>C7J630</accession>
<feature type="chain" id="PRO_0000444461" description="Polycomb group protein FIE1">
    <location>
        <begin position="1"/>
        <end position="466"/>
    </location>
</feature>
<feature type="repeat" description="WD 1" evidence="1">
    <location>
        <begin position="167"/>
        <end position="209"/>
    </location>
</feature>
<feature type="repeat" description="WD 2" evidence="1">
    <location>
        <begin position="212"/>
        <end position="252"/>
    </location>
</feature>
<feature type="repeat" description="WD 3" evidence="1">
    <location>
        <begin position="258"/>
        <end position="298"/>
    </location>
</feature>
<feature type="repeat" description="WD 4" evidence="1">
    <location>
        <begin position="324"/>
        <end position="361"/>
    </location>
</feature>
<feature type="repeat" description="WD 5" evidence="1">
    <location>
        <begin position="374"/>
        <end position="414"/>
    </location>
</feature>
<feature type="repeat" description="WD 6" evidence="1">
    <location>
        <begin position="421"/>
        <end position="460"/>
    </location>
</feature>
<feature type="region of interest" description="Disordered" evidence="2">
    <location>
        <begin position="1"/>
        <end position="71"/>
    </location>
</feature>
<feature type="compositionally biased region" description="Basic residues" evidence="2">
    <location>
        <begin position="1"/>
        <end position="10"/>
    </location>
</feature>
<feature type="compositionally biased region" description="Low complexity" evidence="2">
    <location>
        <begin position="31"/>
        <end position="49"/>
    </location>
</feature>
<evidence type="ECO:0000255" key="1"/>
<evidence type="ECO:0000256" key="2">
    <source>
        <dbReference type="SAM" id="MobiDB-lite"/>
    </source>
</evidence>
<evidence type="ECO:0000269" key="3">
    <source>
    </source>
</evidence>
<evidence type="ECO:0000269" key="4">
    <source>
    </source>
</evidence>
<evidence type="ECO:0000269" key="5">
    <source>
    </source>
</evidence>
<evidence type="ECO:0000269" key="6">
    <source>
    </source>
</evidence>
<evidence type="ECO:0000303" key="7">
    <source>
    </source>
</evidence>
<evidence type="ECO:0000303" key="8">
    <source>
    </source>
</evidence>
<evidence type="ECO:0000305" key="9"/>
<evidence type="ECO:0000312" key="10">
    <source>
        <dbReference type="EMBL" id="BAD03075.1"/>
    </source>
</evidence>
<evidence type="ECO:0000312" key="11">
    <source>
        <dbReference type="EMBL" id="BAT03753.1"/>
    </source>
</evidence>
<evidence type="ECO:0000312" key="12">
    <source>
        <dbReference type="EMBL" id="EAZ41450.1"/>
    </source>
</evidence>
<proteinExistence type="evidence at protein level"/>
<organism>
    <name type="scientific">Oryza sativa subsp. japonica</name>
    <name type="common">Rice</name>
    <dbReference type="NCBI Taxonomy" id="39947"/>
    <lineage>
        <taxon>Eukaryota</taxon>
        <taxon>Viridiplantae</taxon>
        <taxon>Streptophyta</taxon>
        <taxon>Embryophyta</taxon>
        <taxon>Tracheophyta</taxon>
        <taxon>Spermatophyta</taxon>
        <taxon>Magnoliopsida</taxon>
        <taxon>Liliopsida</taxon>
        <taxon>Poales</taxon>
        <taxon>Poaceae</taxon>
        <taxon>BOP clade</taxon>
        <taxon>Oryzoideae</taxon>
        <taxon>Oryzeae</taxon>
        <taxon>Oryzinae</taxon>
        <taxon>Oryza</taxon>
        <taxon>Oryza sativa</taxon>
    </lineage>
</organism>
<comment type="function">
    <text evidence="5 6">Polycomb group (PcG) protein. PcG proteins act by forming multiprotein complexes, which are required to maintain the transcriptionally repressive state of homeotic genes throughout development. PcG proteins are not required to initiate repression, but to maintain it during later stages of development. They act via the methylation of histones, rendering chromatin heritably changed in its expressibility (PubMed:23150632, PubMed:27133784). Together with EZ1 and CLF forms a complex that is involved in gene transcriptional repression by trimethylation on histone H3 'Lys-27' (H3K27me3) of target genes (PubMed:23150632). Involved in the regulation of embryo and seed endosperm development. FIE1-containing PcG complex in seed endosperm regulates the expression of various transcription factors by trimethylation on histone H3 'Lys-27' (H3K27me3) of target genes. Involved in the overall expression regulation of nutrient metabolism genes, such as prolamin synthesis and seed storage protein synthesis genes. Can regulate valine, leucine and isoleucine metabolism-related genes (PubMed:27133784).</text>
</comment>
<comment type="subunit">
    <text evidence="5">Interacts with EZ1 and CLF (PubMed:23150632). Component of the polycomb repressive complex 2 (PRC2), which methylates 'Lys-27' residues of histone H3 (H3K27me3), leading to transcriptional repression of the affected target gene (PubMed:23150632).</text>
</comment>
<comment type="tissue specificity">
    <text evidence="3 4 6">Expressed specifically in seed endosperm.</text>
</comment>
<comment type="miscellaneous">
    <text evidence="3 5 6">The FIE1 locus is imprinted. Maternal inherited gene is expressed in the ovule (the egg and the central cell), while the paternal inherited gene is silenced in the pollen. After fertilization, only the maternal inherited allele is expressed (PubMed:19825651). The gain-of-function epi-allele (Epi-df) plants exhibit dwarf phenotype, defect in flower development and very poor seed set (PubMed:23150632). Plants silencing FIE1 have delayed embryo development, reduced seed set, and reduced grain length, width and weight (PubMed:27133784).</text>
</comment>
<comment type="similarity">
    <text evidence="9">Belongs to the WD repeat ESC family.</text>
</comment>
<comment type="sequence caution" evidence="9">
    <conflict type="erroneous gene model prediction">
        <sequence resource="EMBL-CDS" id="BAH94100"/>
    </conflict>
</comment>
<dbReference type="EMBL" id="AP003896">
    <property type="protein sequence ID" value="BAD03075.1"/>
    <property type="molecule type" value="Genomic_DNA"/>
</dbReference>
<dbReference type="EMBL" id="AP008214">
    <property type="protein sequence ID" value="BAH94100.1"/>
    <property type="status" value="ALT_SEQ"/>
    <property type="molecule type" value="Genomic_DNA"/>
</dbReference>
<dbReference type="EMBL" id="AP014964">
    <property type="protein sequence ID" value="BAT03753.1"/>
    <property type="molecule type" value="Genomic_DNA"/>
</dbReference>
<dbReference type="EMBL" id="CM000145">
    <property type="protein sequence ID" value="EAZ41450.1"/>
    <property type="molecule type" value="Genomic_DNA"/>
</dbReference>
<dbReference type="EMBL" id="AK242200">
    <property type="protein sequence ID" value="BAH01221.1"/>
    <property type="molecule type" value="mRNA"/>
</dbReference>
<dbReference type="SMR" id="Q6ZJW8"/>
<dbReference type="FunCoup" id="Q6ZJW8">
    <property type="interactions" value="1688"/>
</dbReference>
<dbReference type="STRING" id="39947.Q6ZJW8"/>
<dbReference type="PaxDb" id="39947-Q6ZJW8"/>
<dbReference type="EnsemblPlants" id="Os08t0137250-01">
    <property type="protein sequence ID" value="Os08t0137250-01"/>
    <property type="gene ID" value="Os08g0137250"/>
</dbReference>
<dbReference type="GeneID" id="9271694"/>
<dbReference type="Gramene" id="Os08t0137250-01">
    <property type="protein sequence ID" value="Os08t0137250-01"/>
    <property type="gene ID" value="Os08g0137250"/>
</dbReference>
<dbReference type="KEGG" id="dosa:Os08g0137250"/>
<dbReference type="KEGG" id="osa:9271694"/>
<dbReference type="eggNOG" id="KOG1034">
    <property type="taxonomic scope" value="Eukaryota"/>
</dbReference>
<dbReference type="HOGENOM" id="CLU_032683_2_0_1"/>
<dbReference type="InParanoid" id="Q6ZJW8"/>
<dbReference type="OMA" id="VWEMDPS"/>
<dbReference type="OrthoDB" id="7318948at2759"/>
<dbReference type="Proteomes" id="UP000000763">
    <property type="component" value="Chromosome 8"/>
</dbReference>
<dbReference type="Proteomes" id="UP000007752">
    <property type="component" value="Chromosome 8"/>
</dbReference>
<dbReference type="Proteomes" id="UP000059680">
    <property type="component" value="Chromosome 8"/>
</dbReference>
<dbReference type="GO" id="GO:0035098">
    <property type="term" value="C:ESC/E(Z) complex"/>
    <property type="evidence" value="ECO:0000318"/>
    <property type="project" value="GO_Central"/>
</dbReference>
<dbReference type="GO" id="GO:0031519">
    <property type="term" value="C:PcG protein complex"/>
    <property type="evidence" value="ECO:0000314"/>
    <property type="project" value="UniProtKB"/>
</dbReference>
<dbReference type="GO" id="GO:0030154">
    <property type="term" value="P:cell differentiation"/>
    <property type="evidence" value="ECO:0007669"/>
    <property type="project" value="UniProtKB-KW"/>
</dbReference>
<dbReference type="GO" id="GO:0009793">
    <property type="term" value="P:embryo development ending in seed dormancy"/>
    <property type="evidence" value="ECO:0000315"/>
    <property type="project" value="UniProtKB"/>
</dbReference>
<dbReference type="GO" id="GO:0009960">
    <property type="term" value="P:endosperm development"/>
    <property type="evidence" value="ECO:0000315"/>
    <property type="project" value="UniProtKB"/>
</dbReference>
<dbReference type="GO" id="GO:0009908">
    <property type="term" value="P:flower development"/>
    <property type="evidence" value="ECO:0000315"/>
    <property type="project" value="UniProtKB"/>
</dbReference>
<dbReference type="GO" id="GO:0031507">
    <property type="term" value="P:heterochromatin formation"/>
    <property type="evidence" value="ECO:0000315"/>
    <property type="project" value="UniProtKB"/>
</dbReference>
<dbReference type="GO" id="GO:0000122">
    <property type="term" value="P:negative regulation of transcription by RNA polymerase II"/>
    <property type="evidence" value="ECO:0000318"/>
    <property type="project" value="GO_Central"/>
</dbReference>
<dbReference type="GO" id="GO:0048316">
    <property type="term" value="P:seed development"/>
    <property type="evidence" value="ECO:0000315"/>
    <property type="project" value="UniProtKB"/>
</dbReference>
<dbReference type="FunFam" id="2.130.10.10:FF:000268">
    <property type="entry name" value="polycomb group protein FIE1"/>
    <property type="match status" value="1"/>
</dbReference>
<dbReference type="Gene3D" id="2.130.10.10">
    <property type="entry name" value="YVTN repeat-like/Quinoprotein amine dehydrogenase"/>
    <property type="match status" value="1"/>
</dbReference>
<dbReference type="InterPro" id="IPR020472">
    <property type="entry name" value="G-protein_beta_WD-40_rep"/>
</dbReference>
<dbReference type="InterPro" id="IPR051243">
    <property type="entry name" value="PcG_WD-repeat"/>
</dbReference>
<dbReference type="InterPro" id="IPR015943">
    <property type="entry name" value="WD40/YVTN_repeat-like_dom_sf"/>
</dbReference>
<dbReference type="InterPro" id="IPR019775">
    <property type="entry name" value="WD40_repeat_CS"/>
</dbReference>
<dbReference type="InterPro" id="IPR036322">
    <property type="entry name" value="WD40_repeat_dom_sf"/>
</dbReference>
<dbReference type="InterPro" id="IPR001680">
    <property type="entry name" value="WD40_rpt"/>
</dbReference>
<dbReference type="PANTHER" id="PTHR10253">
    <property type="entry name" value="POLYCOMB PROTEIN"/>
    <property type="match status" value="1"/>
</dbReference>
<dbReference type="Pfam" id="PF00400">
    <property type="entry name" value="WD40"/>
    <property type="match status" value="3"/>
</dbReference>
<dbReference type="PRINTS" id="PR00320">
    <property type="entry name" value="GPROTEINBRPT"/>
</dbReference>
<dbReference type="SMART" id="SM00320">
    <property type="entry name" value="WD40"/>
    <property type="match status" value="6"/>
</dbReference>
<dbReference type="SUPFAM" id="SSF50978">
    <property type="entry name" value="WD40 repeat-like"/>
    <property type="match status" value="1"/>
</dbReference>
<dbReference type="PROSITE" id="PS00678">
    <property type="entry name" value="WD_REPEATS_1"/>
    <property type="match status" value="1"/>
</dbReference>
<dbReference type="PROSITE" id="PS50082">
    <property type="entry name" value="WD_REPEATS_2"/>
    <property type="match status" value="2"/>
</dbReference>
<dbReference type="PROSITE" id="PS50294">
    <property type="entry name" value="WD_REPEATS_REGION"/>
    <property type="match status" value="1"/>
</dbReference>
<sequence length="466" mass="51849">MGPTSRNHKSSQKDVAPNEAKPPRYPQRNRSITASASASAFASPAVANSRVAKERPSSSTAGEGEPQETVLKLPSIPTLPARMAKLVPLEGLGCEAAVGSLTPSREREYKVTNKHTEGRRPVYAIVFNFLDVRYYDIFATACGPRLSTYRCLMNGKFALLQSYLDDDMNESFFTVSWACDIDGNPLLVAAGSTGIIRVINCATEKIYKSLVGHGGSVNEIKSQPSNPSLIISASKDESIKLWNVQTGILILVFGGVGGHRHEVLGVDFHTSDIYRFLSCGMDNTVRIWSMKEFWEYVEKSYSWTDATSKFPTKFVQFPVLCAEIHSNYVDCTKWLGDFVLSKSVENEILLWESITKEENPGEGHIDVLQKYPVPECNIWFMKFSCDFHHNQLAIGNRDGKVYVWKVQTSPPVLIARLNNPQVKSAIRQTAVSFDGSTILACTEDGNIWRWDEVDHPTAPVPSKKQK</sequence>
<gene>
    <name evidence="7" type="primary">FIE1</name>
    <name evidence="11" type="ordered locus">Os08g0137250</name>
    <name evidence="9" type="ordered locus">LOC_Os08g04290</name>
    <name evidence="10" type="ORF">OJ1613_G04.22</name>
    <name evidence="12" type="ORF">OsJ_25973</name>
</gene>
<protein>
    <recommendedName>
        <fullName evidence="9">Polycomb group protein FIE1</fullName>
    </recommendedName>
    <alternativeName>
        <fullName evidence="7">Protein FERTILIZATION-INDEPENDENT ENDOSPERM 1</fullName>
        <shortName evidence="7">OsFIE1</shortName>
    </alternativeName>
    <alternativeName>
        <fullName evidence="8">WD40 repeat-containing protein 154</fullName>
        <shortName evidence="8">OsWD40-154</shortName>
    </alternativeName>
</protein>
<name>FIE1_ORYSJ</name>
<keyword id="KW-0156">Chromatin regulator</keyword>
<keyword id="KW-0217">Developmental protein</keyword>
<keyword id="KW-0221">Differentiation</keyword>
<keyword id="KW-1185">Reference proteome</keyword>
<keyword id="KW-0677">Repeat</keyword>
<keyword id="KW-0804">Transcription</keyword>
<keyword id="KW-0805">Transcription regulation</keyword>
<keyword id="KW-0853">WD repeat</keyword>
<reference key="1">
    <citation type="journal article" date="2005" name="Nature">
        <title>The map-based sequence of the rice genome.</title>
        <authorList>
            <consortium name="International rice genome sequencing project (IRGSP)"/>
        </authorList>
    </citation>
    <scope>NUCLEOTIDE SEQUENCE [LARGE SCALE GENOMIC DNA]</scope>
    <source>
        <strain>cv. Nipponbare</strain>
    </source>
</reference>
<reference key="2">
    <citation type="journal article" date="2008" name="Nucleic Acids Res.">
        <title>The rice annotation project database (RAP-DB): 2008 update.</title>
        <authorList>
            <consortium name="The rice annotation project (RAP)"/>
        </authorList>
    </citation>
    <scope>GENOME REANNOTATION</scope>
    <source>
        <strain>cv. Nipponbare</strain>
    </source>
</reference>
<reference key="3">
    <citation type="journal article" date="2013" name="Rice">
        <title>Improvement of the Oryza sativa Nipponbare reference genome using next generation sequence and optical map data.</title>
        <authorList>
            <person name="Kawahara Y."/>
            <person name="de la Bastide M."/>
            <person name="Hamilton J.P."/>
            <person name="Kanamori H."/>
            <person name="McCombie W.R."/>
            <person name="Ouyang S."/>
            <person name="Schwartz D.C."/>
            <person name="Tanaka T."/>
            <person name="Wu J."/>
            <person name="Zhou S."/>
            <person name="Childs K.L."/>
            <person name="Davidson R.M."/>
            <person name="Lin H."/>
            <person name="Quesada-Ocampo L."/>
            <person name="Vaillancourt B."/>
            <person name="Sakai H."/>
            <person name="Lee S.S."/>
            <person name="Kim J."/>
            <person name="Numa H."/>
            <person name="Itoh T."/>
            <person name="Buell C.R."/>
            <person name="Matsumoto T."/>
        </authorList>
    </citation>
    <scope>GENOME REANNOTATION</scope>
    <source>
        <strain>cv. Nipponbare</strain>
    </source>
</reference>
<reference key="4">
    <citation type="journal article" date="2005" name="PLoS Biol.">
        <title>The genomes of Oryza sativa: a history of duplications.</title>
        <authorList>
            <person name="Yu J."/>
            <person name="Wang J."/>
            <person name="Lin W."/>
            <person name="Li S."/>
            <person name="Li H."/>
            <person name="Zhou J."/>
            <person name="Ni P."/>
            <person name="Dong W."/>
            <person name="Hu S."/>
            <person name="Zeng C."/>
            <person name="Zhang J."/>
            <person name="Zhang Y."/>
            <person name="Li R."/>
            <person name="Xu Z."/>
            <person name="Li S."/>
            <person name="Li X."/>
            <person name="Zheng H."/>
            <person name="Cong L."/>
            <person name="Lin L."/>
            <person name="Yin J."/>
            <person name="Geng J."/>
            <person name="Li G."/>
            <person name="Shi J."/>
            <person name="Liu J."/>
            <person name="Lv H."/>
            <person name="Li J."/>
            <person name="Wang J."/>
            <person name="Deng Y."/>
            <person name="Ran L."/>
            <person name="Shi X."/>
            <person name="Wang X."/>
            <person name="Wu Q."/>
            <person name="Li C."/>
            <person name="Ren X."/>
            <person name="Wang J."/>
            <person name="Wang X."/>
            <person name="Li D."/>
            <person name="Liu D."/>
            <person name="Zhang X."/>
            <person name="Ji Z."/>
            <person name="Zhao W."/>
            <person name="Sun Y."/>
            <person name="Zhang Z."/>
            <person name="Bao J."/>
            <person name="Han Y."/>
            <person name="Dong L."/>
            <person name="Ji J."/>
            <person name="Chen P."/>
            <person name="Wu S."/>
            <person name="Liu J."/>
            <person name="Xiao Y."/>
            <person name="Bu D."/>
            <person name="Tan J."/>
            <person name="Yang L."/>
            <person name="Ye C."/>
            <person name="Zhang J."/>
            <person name="Xu J."/>
            <person name="Zhou Y."/>
            <person name="Yu Y."/>
            <person name="Zhang B."/>
            <person name="Zhuang S."/>
            <person name="Wei H."/>
            <person name="Liu B."/>
            <person name="Lei M."/>
            <person name="Yu H."/>
            <person name="Li Y."/>
            <person name="Xu H."/>
            <person name="Wei S."/>
            <person name="He X."/>
            <person name="Fang L."/>
            <person name="Zhang Z."/>
            <person name="Zhang Y."/>
            <person name="Huang X."/>
            <person name="Su Z."/>
            <person name="Tong W."/>
            <person name="Li J."/>
            <person name="Tong Z."/>
            <person name="Li S."/>
            <person name="Ye J."/>
            <person name="Wang L."/>
            <person name="Fang L."/>
            <person name="Lei T."/>
            <person name="Chen C.-S."/>
            <person name="Chen H.-C."/>
            <person name="Xu Z."/>
            <person name="Li H."/>
            <person name="Huang H."/>
            <person name="Zhang F."/>
            <person name="Xu H."/>
            <person name="Li N."/>
            <person name="Zhao C."/>
            <person name="Li S."/>
            <person name="Dong L."/>
            <person name="Huang Y."/>
            <person name="Li L."/>
            <person name="Xi Y."/>
            <person name="Qi Q."/>
            <person name="Li W."/>
            <person name="Zhang B."/>
            <person name="Hu W."/>
            <person name="Zhang Y."/>
            <person name="Tian X."/>
            <person name="Jiao Y."/>
            <person name="Liang X."/>
            <person name="Jin J."/>
            <person name="Gao L."/>
            <person name="Zheng W."/>
            <person name="Hao B."/>
            <person name="Liu S.-M."/>
            <person name="Wang W."/>
            <person name="Yuan L."/>
            <person name="Cao M."/>
            <person name="McDermott J."/>
            <person name="Samudrala R."/>
            <person name="Wang J."/>
            <person name="Wong G.K.-S."/>
            <person name="Yang H."/>
        </authorList>
    </citation>
    <scope>NUCLEOTIDE SEQUENCE [LARGE SCALE GENOMIC DNA]</scope>
    <source>
        <strain>cv. Nipponbare</strain>
    </source>
</reference>
<reference key="5">
    <citation type="submission" date="2006-10" db="EMBL/GenBank/DDBJ databases">
        <title>Oryza sativa full length cDNA.</title>
        <authorList>
            <consortium name="The rice full-length cDNA consortium"/>
        </authorList>
    </citation>
    <scope>NUCLEOTIDE SEQUENCE [LARGE SCALE MRNA]</scope>
    <source>
        <strain>cv. Nipponbare</strain>
    </source>
</reference>
<reference key="6">
    <citation type="journal article" date="2009" name="Mol. Plant">
        <title>Expression, imprinting, and evolution of rice homologs of the polycomb group genes.</title>
        <authorList>
            <person name="Luo M."/>
            <person name="Platten D."/>
            <person name="Chaudhury A."/>
            <person name="Peacock W.J."/>
            <person name="Dennis E.S."/>
        </authorList>
    </citation>
    <scope>TISSUE SPECIFICITY</scope>
    <scope>IMPRINTING</scope>
</reference>
<reference key="7">
    <citation type="journal article" date="2012" name="BMC Genomics">
        <title>Genomic survey, expression profile and co-expression network analysis of OsWD40 family in rice.</title>
        <authorList>
            <person name="Ouyang Y."/>
            <person name="Huang X."/>
            <person name="Lu Z."/>
            <person name="Yao J."/>
        </authorList>
    </citation>
    <scope>GENE FAMILY</scope>
    <scope>NOMENCLATURE</scope>
    <scope>TISSUE SPECIFICITY</scope>
</reference>
<reference key="8">
    <citation type="journal article" date="2012" name="Plant Cell">
        <title>Identification and characterization of an epi-allele of FIE1 reveals a regulatory linkage between two epigenetic marks in rice.</title>
        <authorList>
            <person name="Zhang L."/>
            <person name="Cheng Z."/>
            <person name="Qin R."/>
            <person name="Qiu Y."/>
            <person name="Wang J.L."/>
            <person name="Cui X."/>
            <person name="Gu L."/>
            <person name="Zhang X."/>
            <person name="Guo X."/>
            <person name="Wang D."/>
            <person name="Jiang L."/>
            <person name="Wu C.Y."/>
            <person name="Wang H."/>
            <person name="Cao X."/>
            <person name="Wan J."/>
        </authorList>
    </citation>
    <scope>FUNCTION</scope>
    <scope>SUBUNIT</scope>
    <scope>INTERACTION WITH EZ1 AND CLF</scope>
</reference>
<reference key="9">
    <citation type="journal article" date="2016" name="Plant J.">
        <title>Imprinted gene OsFIE1 modulates rice seed development by influencing nutrient metabolism and modifying genome H3K27me3.</title>
        <authorList>
            <person name="Huang X."/>
            <person name="Lu Z."/>
            <person name="Wang X."/>
            <person name="Ouyang Y."/>
            <person name="Chen W."/>
            <person name="Xie K."/>
            <person name="Wang D."/>
            <person name="Luo M."/>
            <person name="Luo J."/>
            <person name="Yao J."/>
        </authorList>
    </citation>
    <scope>FUNCTION</scope>
    <scope>TISSUE SPECIFICITY</scope>
</reference>